<organism>
    <name type="scientific">Influenza A virus (strain A/Turkey/Wisconsin/1/1966 H9N2)</name>
    <dbReference type="NCBI Taxonomy" id="385620"/>
    <lineage>
        <taxon>Viruses</taxon>
        <taxon>Riboviria</taxon>
        <taxon>Orthornavirae</taxon>
        <taxon>Negarnaviricota</taxon>
        <taxon>Polyploviricotina</taxon>
        <taxon>Insthoviricetes</taxon>
        <taxon>Articulavirales</taxon>
        <taxon>Orthomyxoviridae</taxon>
        <taxon>Alphainfluenzavirus</taxon>
        <taxon>Alphainfluenzavirus influenzae</taxon>
        <taxon>Influenza A virus</taxon>
    </lineage>
</organism>
<gene>
    <name evidence="1" type="primary">NS</name>
</gene>
<sequence>MDSNTVSSFQVDCFLWHVRKRFADQELGDAPFLDRLRRDQKSLRGRGSTLGLDIETATRAGKQIVERILEEESDEALKMTIASVPASRYLTDMTLEEMSRDWFMLMPKQKVAGSLCIRMDQAIMDKNIILKANFSVIFDRLETLILLRAFTEEGAIVGEISPLPSLPGHTDEDVKNAIGVLIGGLEWNDNTVRVSETLQRFAWKSCNEDGRPPLPPKQKRKMARTIESEV</sequence>
<comment type="function">
    <text evidence="1">Inhibits post-transcriptional processing of cellular pre-mRNA, by binding and inhibiting two cellular proteins that are required for the 3'-end processing of cellular pre-mRNAs: the 30 kDa cleavage and polyadenylation specificity factor/CPSF4 and the poly(A)-binding protein 2/PABPN1. In turn, unprocessed 3' end pre-mRNAs accumulate in the host nucleus and are no longer exported to the cytoplasm. Cellular protein synthesis is thereby shut off very early after virus infection. Viral protein synthesis is not affected by the inhibition of the cellular 3' end processing machinery because the poly(A) tails of viral mRNAs are produced by the viral polymerase through a stuttering mechanism. Prevents the establishment of the cellular antiviral state by inhibiting TRIM25-mediated RIGI ubiquitination, which normally triggers the antiviral transduction signal that leads to the activation of type I IFN genes by transcription factors IRF3 and IRF7. Also binds poly(A) and U6 snRNA. Inhibits the integrated stress response (ISR) in the infected cell by blocking dsRNA binding by EIF2AK2/PKR and further phosphorylation of EIF2S1/EIF-2ALPHA. Stress granule formation is thus inhibited, which allows protein synthesis and viral replication.</text>
</comment>
<comment type="subunit">
    <text evidence="1">Homodimer. Interacts with host TRIM25 (via coiled coil); this interaction specifically inhibits TRIM25 multimerization and TRIM25-mediated RIGI CARD ubiquitination. Interacts with human EIF2AK2/PKR, CPSF4, IVNS1ABP and PABPN1.</text>
</comment>
<comment type="subcellular location">
    <subcellularLocation>
        <location evidence="1">Host nucleus</location>
    </subcellularLocation>
    <subcellularLocation>
        <location evidence="1">Host cytoplasm</location>
    </subcellularLocation>
    <text evidence="1">In uninfected, transfected cells, NS1 is localized in the nucleus. Only in virus infected cells, the nuclear export signal is unveiled, presumably by a viral protein, and a fraction of NS1 is exported in the cytoplasm.</text>
</comment>
<comment type="alternative products">
    <event type="alternative splicing"/>
    <isoform>
        <id>Q3SBF0-1</id>
        <name>NS1</name>
        <sequence type="displayed"/>
    </isoform>
    <isoform>
        <id>Q3SBF1-1</id>
        <name>NEP</name>
        <name>NS2</name>
        <sequence type="external"/>
    </isoform>
</comment>
<comment type="domain">
    <text evidence="1">The dsRNA-binding region is required for suppression of RNA silencing.</text>
</comment>
<comment type="PTM">
    <text evidence="1">Upon interferon induction, ISGylated via host HERC5; this results in the impairment of NS1 interaction with RNA targets due to its inability to form homodimers and to interact with host EIF2AK2/PKR.</text>
</comment>
<comment type="similarity">
    <text evidence="1">Belongs to the influenza A viruses NS1 family.</text>
</comment>
<proteinExistence type="inferred from homology"/>
<dbReference type="EMBL" id="DQ067441">
    <property type="protein sequence ID" value="AAY52686.1"/>
    <property type="molecule type" value="Genomic_RNA"/>
</dbReference>
<dbReference type="EMBL" id="CY014667">
    <property type="protein sequence ID" value="ABI84528.1"/>
    <property type="molecule type" value="Genomic_RNA"/>
</dbReference>
<dbReference type="SMR" id="Q3SBF0"/>
<dbReference type="Proteomes" id="UP000115522">
    <property type="component" value="Genome"/>
</dbReference>
<dbReference type="GO" id="GO:0030430">
    <property type="term" value="C:host cell cytoplasm"/>
    <property type="evidence" value="ECO:0007669"/>
    <property type="project" value="UniProtKB-SubCell"/>
</dbReference>
<dbReference type="GO" id="GO:0042025">
    <property type="term" value="C:host cell nucleus"/>
    <property type="evidence" value="ECO:0007669"/>
    <property type="project" value="UniProtKB-SubCell"/>
</dbReference>
<dbReference type="GO" id="GO:0030291">
    <property type="term" value="F:protein serine/threonine kinase inhibitor activity"/>
    <property type="evidence" value="ECO:0007669"/>
    <property type="project" value="UniProtKB-KW"/>
</dbReference>
<dbReference type="GO" id="GO:0003723">
    <property type="term" value="F:RNA binding"/>
    <property type="evidence" value="ECO:0007669"/>
    <property type="project" value="UniProtKB-KW"/>
</dbReference>
<dbReference type="GO" id="GO:0039540">
    <property type="term" value="P:symbiont-mediated suppression of host cytoplasmic pattern recognition receptor signaling pathway via inhibition of RIG-I activity"/>
    <property type="evidence" value="ECO:0007669"/>
    <property type="project" value="UniProtKB-KW"/>
</dbReference>
<dbReference type="GO" id="GO:0039657">
    <property type="term" value="P:symbiont-mediated suppression of host gene expression"/>
    <property type="evidence" value="ECO:0007669"/>
    <property type="project" value="UniProtKB-KW"/>
</dbReference>
<dbReference type="GO" id="GO:0039524">
    <property type="term" value="P:symbiont-mediated suppression of host mRNA processing"/>
    <property type="evidence" value="ECO:0007669"/>
    <property type="project" value="UniProtKB-KW"/>
</dbReference>
<dbReference type="GO" id="GO:0039580">
    <property type="term" value="P:symbiont-mediated suppression of host PKR/eIFalpha signaling"/>
    <property type="evidence" value="ECO:0007669"/>
    <property type="project" value="UniProtKB-KW"/>
</dbReference>
<dbReference type="GO" id="GO:0039502">
    <property type="term" value="P:symbiont-mediated suppression of host type I interferon-mediated signaling pathway"/>
    <property type="evidence" value="ECO:0007669"/>
    <property type="project" value="UniProtKB-KW"/>
</dbReference>
<dbReference type="FunFam" id="1.10.287.10:FF:000001">
    <property type="entry name" value="Non-structural protein 1"/>
    <property type="match status" value="1"/>
</dbReference>
<dbReference type="FunFam" id="3.30.420.330:FF:000001">
    <property type="entry name" value="Non-structural protein 1"/>
    <property type="match status" value="1"/>
</dbReference>
<dbReference type="Gene3D" id="3.30.420.330">
    <property type="entry name" value="Influenza virus non-structural protein, effector domain"/>
    <property type="match status" value="1"/>
</dbReference>
<dbReference type="Gene3D" id="1.10.287.10">
    <property type="entry name" value="S15/NS1, RNA-binding"/>
    <property type="match status" value="1"/>
</dbReference>
<dbReference type="HAMAP" id="MF_04066">
    <property type="entry name" value="INFV_NS1"/>
    <property type="match status" value="1"/>
</dbReference>
<dbReference type="InterPro" id="IPR004208">
    <property type="entry name" value="NS1"/>
</dbReference>
<dbReference type="InterPro" id="IPR000256">
    <property type="entry name" value="NS1A"/>
</dbReference>
<dbReference type="InterPro" id="IPR038064">
    <property type="entry name" value="NS1A_effect_dom-like_sf"/>
</dbReference>
<dbReference type="InterPro" id="IPR009068">
    <property type="entry name" value="uS15_NS1_RNA-bd_sf"/>
</dbReference>
<dbReference type="Pfam" id="PF00600">
    <property type="entry name" value="Flu_NS1"/>
    <property type="match status" value="1"/>
</dbReference>
<dbReference type="SUPFAM" id="SSF143021">
    <property type="entry name" value="Ns1 effector domain-like"/>
    <property type="match status" value="1"/>
</dbReference>
<dbReference type="SUPFAM" id="SSF47060">
    <property type="entry name" value="S15/NS1 RNA-binding domain"/>
    <property type="match status" value="1"/>
</dbReference>
<keyword id="KW-0025">Alternative splicing</keyword>
<keyword id="KW-1262">Eukaryotic host gene expression shutoff by virus</keyword>
<keyword id="KW-1035">Host cytoplasm</keyword>
<keyword id="KW-1190">Host gene expression shutoff by virus</keyword>
<keyword id="KW-1192">Host mRNA suppression by virus</keyword>
<keyword id="KW-1048">Host nucleus</keyword>
<keyword id="KW-0945">Host-virus interaction</keyword>
<keyword id="KW-1090">Inhibition of host innate immune response by virus</keyword>
<keyword id="KW-1114">Inhibition of host interferon signaling pathway by virus</keyword>
<keyword id="KW-1102">Inhibition of host PKR by virus</keyword>
<keyword id="KW-1103">Inhibition of host pre-mRNA processing by virus</keyword>
<keyword id="KW-1088">Inhibition of host RIG-I by virus</keyword>
<keyword id="KW-1113">Inhibition of host RLR pathway by virus</keyword>
<keyword id="KW-0922">Interferon antiviral system evasion</keyword>
<keyword id="KW-0694">RNA-binding</keyword>
<keyword id="KW-0832">Ubl conjugation</keyword>
<keyword id="KW-0899">Viral immunoevasion</keyword>
<name>NS1_I66A1</name>
<organismHost>
    <name type="scientific">Aves</name>
    <dbReference type="NCBI Taxonomy" id="8782"/>
</organismHost>
<protein>
    <recommendedName>
        <fullName evidence="1">Non-structural protein 1</fullName>
        <shortName evidence="1">NS1</shortName>
    </recommendedName>
    <alternativeName>
        <fullName evidence="1">NS1A</fullName>
    </alternativeName>
</protein>
<reference key="1">
    <citation type="journal article" date="2005" name="Virology">
        <title>Evolution of H9N2 influenza viruses from domestic poultry in Mainland China.</title>
        <authorList>
            <person name="Li C."/>
            <person name="Yu K."/>
            <person name="Tian G."/>
            <person name="Yu D."/>
            <person name="Liu L."/>
            <person name="Jing B."/>
            <person name="Ping J."/>
            <person name="Chen H."/>
        </authorList>
    </citation>
    <scope>NUCLEOTIDE SEQUENCE [GENOMIC RNA]</scope>
</reference>
<reference key="2">
    <citation type="journal article" date="2006" name="Science">
        <title>Large-scale sequence analysis of avian influenza isolates.</title>
        <authorList>
            <person name="Obenauer J.C."/>
            <person name="Denson J."/>
            <person name="Mehta P.K."/>
            <person name="Su X."/>
            <person name="Mukatira S."/>
            <person name="Finkelstein D.B."/>
            <person name="Xu X."/>
            <person name="Wang J."/>
            <person name="Ma J."/>
            <person name="Fan Y."/>
            <person name="Rakestraw K.M."/>
            <person name="Webster R.G."/>
            <person name="Hoffmann E."/>
            <person name="Krauss S."/>
            <person name="Zheng J."/>
            <person name="Zhang Z."/>
            <person name="Naeve C.W."/>
        </authorList>
    </citation>
    <scope>NUCLEOTIDE SEQUENCE [GENOMIC RNA]</scope>
</reference>
<evidence type="ECO:0000255" key="1">
    <source>
        <dbReference type="HAMAP-Rule" id="MF_04066"/>
    </source>
</evidence>
<evidence type="ECO:0000256" key="2">
    <source>
        <dbReference type="SAM" id="MobiDB-lite"/>
    </source>
</evidence>
<accession>Q3SBF0</accession>
<feature type="chain" id="PRO_0000324243" description="Non-structural protein 1">
    <location>
        <begin position="1"/>
        <end position="230"/>
    </location>
</feature>
<feature type="region of interest" description="RNA-binding and homodimerization" evidence="1">
    <location>
        <begin position="1"/>
        <end position="73"/>
    </location>
</feature>
<feature type="region of interest" description="CPSF4-binding" evidence="1">
    <location>
        <begin position="180"/>
        <end position="215"/>
    </location>
</feature>
<feature type="region of interest" description="Disordered" evidence="2">
    <location>
        <begin position="209"/>
        <end position="230"/>
    </location>
</feature>
<feature type="region of interest" description="PABPN1-binding" evidence="1">
    <location>
        <begin position="223"/>
        <end position="230"/>
    </location>
</feature>
<feature type="short sequence motif" description="Nuclear localization signal" evidence="1">
    <location>
        <begin position="34"/>
        <end position="38"/>
    </location>
</feature>
<feature type="short sequence motif" description="Nuclear export signal" evidence="1">
    <location>
        <begin position="137"/>
        <end position="146"/>
    </location>
</feature>